<sequence>MIEFEKPIITKIDENKDYGKFVIEPLERGYGTTLGNSLRRVLLSSLPGAAVTSIKIDGVLHEFDTVPGVREDVMQIILNIKGLAVKSYVEDEKTIELDVQGPAEVTAGDILTDSDIEIVNPDHYLFTIAEGASFQATMTVSTNRGYVPAEENKKDDAPVGTLAVDSIYTPVKKVNYQVEPARVGSNDGFDKLTIEIVTNGTIIPEDALGLSARILIEHLNLFTDLTDVAKATDVMKETEKVNDEKLLDRTIEELDLSVRSYNCLKRAGINTVHDLTEKTEPEMMKVRNLGRKSLEEVKVKLADLGLGLKNDK</sequence>
<dbReference type="EC" id="2.7.7.6" evidence="1"/>
<dbReference type="EMBL" id="CP000419">
    <property type="protein sequence ID" value="ABJ66995.1"/>
    <property type="molecule type" value="Genomic_DNA"/>
</dbReference>
<dbReference type="RefSeq" id="WP_002952135.1">
    <property type="nucleotide sequence ID" value="NC_008532.1"/>
</dbReference>
<dbReference type="SMR" id="Q03IH7"/>
<dbReference type="KEGG" id="ste:STER_1881"/>
<dbReference type="HOGENOM" id="CLU_053084_0_1_9"/>
<dbReference type="GO" id="GO:0005737">
    <property type="term" value="C:cytoplasm"/>
    <property type="evidence" value="ECO:0007669"/>
    <property type="project" value="UniProtKB-ARBA"/>
</dbReference>
<dbReference type="GO" id="GO:0000428">
    <property type="term" value="C:DNA-directed RNA polymerase complex"/>
    <property type="evidence" value="ECO:0007669"/>
    <property type="project" value="UniProtKB-KW"/>
</dbReference>
<dbReference type="GO" id="GO:0003677">
    <property type="term" value="F:DNA binding"/>
    <property type="evidence" value="ECO:0007669"/>
    <property type="project" value="UniProtKB-UniRule"/>
</dbReference>
<dbReference type="GO" id="GO:0003899">
    <property type="term" value="F:DNA-directed RNA polymerase activity"/>
    <property type="evidence" value="ECO:0007669"/>
    <property type="project" value="UniProtKB-UniRule"/>
</dbReference>
<dbReference type="GO" id="GO:0046983">
    <property type="term" value="F:protein dimerization activity"/>
    <property type="evidence" value="ECO:0007669"/>
    <property type="project" value="InterPro"/>
</dbReference>
<dbReference type="GO" id="GO:0006351">
    <property type="term" value="P:DNA-templated transcription"/>
    <property type="evidence" value="ECO:0007669"/>
    <property type="project" value="UniProtKB-UniRule"/>
</dbReference>
<dbReference type="CDD" id="cd06928">
    <property type="entry name" value="RNAP_alpha_NTD"/>
    <property type="match status" value="1"/>
</dbReference>
<dbReference type="FunFam" id="1.10.150.20:FF:000001">
    <property type="entry name" value="DNA-directed RNA polymerase subunit alpha"/>
    <property type="match status" value="1"/>
</dbReference>
<dbReference type="FunFam" id="2.170.120.12:FF:000001">
    <property type="entry name" value="DNA-directed RNA polymerase subunit alpha"/>
    <property type="match status" value="1"/>
</dbReference>
<dbReference type="Gene3D" id="1.10.150.20">
    <property type="entry name" value="5' to 3' exonuclease, C-terminal subdomain"/>
    <property type="match status" value="1"/>
</dbReference>
<dbReference type="Gene3D" id="2.170.120.12">
    <property type="entry name" value="DNA-directed RNA polymerase, insert domain"/>
    <property type="match status" value="1"/>
</dbReference>
<dbReference type="Gene3D" id="3.30.1360.10">
    <property type="entry name" value="RNA polymerase, RBP11-like subunit"/>
    <property type="match status" value="1"/>
</dbReference>
<dbReference type="HAMAP" id="MF_00059">
    <property type="entry name" value="RNApol_bact_RpoA"/>
    <property type="match status" value="1"/>
</dbReference>
<dbReference type="InterPro" id="IPR011262">
    <property type="entry name" value="DNA-dir_RNA_pol_insert"/>
</dbReference>
<dbReference type="InterPro" id="IPR011263">
    <property type="entry name" value="DNA-dir_RNA_pol_RpoA/D/Rpb3"/>
</dbReference>
<dbReference type="InterPro" id="IPR011773">
    <property type="entry name" value="DNA-dir_RpoA"/>
</dbReference>
<dbReference type="InterPro" id="IPR036603">
    <property type="entry name" value="RBP11-like"/>
</dbReference>
<dbReference type="InterPro" id="IPR011260">
    <property type="entry name" value="RNAP_asu_C"/>
</dbReference>
<dbReference type="InterPro" id="IPR036643">
    <property type="entry name" value="RNApol_insert_sf"/>
</dbReference>
<dbReference type="NCBIfam" id="NF003513">
    <property type="entry name" value="PRK05182.1-2"/>
    <property type="match status" value="1"/>
</dbReference>
<dbReference type="NCBIfam" id="NF003515">
    <property type="entry name" value="PRK05182.2-1"/>
    <property type="match status" value="1"/>
</dbReference>
<dbReference type="NCBIfam" id="NF003516">
    <property type="entry name" value="PRK05182.2-2"/>
    <property type="match status" value="1"/>
</dbReference>
<dbReference type="NCBIfam" id="NF003518">
    <property type="entry name" value="PRK05182.2-4"/>
    <property type="match status" value="1"/>
</dbReference>
<dbReference type="NCBIfam" id="NF003519">
    <property type="entry name" value="PRK05182.2-5"/>
    <property type="match status" value="1"/>
</dbReference>
<dbReference type="NCBIfam" id="TIGR02027">
    <property type="entry name" value="rpoA"/>
    <property type="match status" value="1"/>
</dbReference>
<dbReference type="Pfam" id="PF01000">
    <property type="entry name" value="RNA_pol_A_bac"/>
    <property type="match status" value="1"/>
</dbReference>
<dbReference type="Pfam" id="PF03118">
    <property type="entry name" value="RNA_pol_A_CTD"/>
    <property type="match status" value="1"/>
</dbReference>
<dbReference type="Pfam" id="PF01193">
    <property type="entry name" value="RNA_pol_L"/>
    <property type="match status" value="1"/>
</dbReference>
<dbReference type="SMART" id="SM00662">
    <property type="entry name" value="RPOLD"/>
    <property type="match status" value="1"/>
</dbReference>
<dbReference type="SUPFAM" id="SSF47789">
    <property type="entry name" value="C-terminal domain of RNA polymerase alpha subunit"/>
    <property type="match status" value="1"/>
</dbReference>
<dbReference type="SUPFAM" id="SSF56553">
    <property type="entry name" value="Insert subdomain of RNA polymerase alpha subunit"/>
    <property type="match status" value="1"/>
</dbReference>
<dbReference type="SUPFAM" id="SSF55257">
    <property type="entry name" value="RBP11-like subunits of RNA polymerase"/>
    <property type="match status" value="1"/>
</dbReference>
<feature type="chain" id="PRO_0000296876" description="DNA-directed RNA polymerase subunit alpha">
    <location>
        <begin position="1"/>
        <end position="312"/>
    </location>
</feature>
<feature type="region of interest" description="Alpha N-terminal domain (alpha-NTD)" evidence="1">
    <location>
        <begin position="1"/>
        <end position="226"/>
    </location>
</feature>
<feature type="region of interest" description="Alpha C-terminal domain (alpha-CTD)" evidence="1">
    <location>
        <begin position="242"/>
        <end position="312"/>
    </location>
</feature>
<proteinExistence type="inferred from homology"/>
<name>RPOA_STRTD</name>
<gene>
    <name evidence="1" type="primary">rpoA</name>
    <name type="ordered locus">STER_1881</name>
</gene>
<accession>Q03IH7</accession>
<protein>
    <recommendedName>
        <fullName evidence="1">DNA-directed RNA polymerase subunit alpha</fullName>
        <shortName evidence="1">RNAP subunit alpha</shortName>
        <ecNumber evidence="1">2.7.7.6</ecNumber>
    </recommendedName>
    <alternativeName>
        <fullName evidence="1">RNA polymerase subunit alpha</fullName>
    </alternativeName>
    <alternativeName>
        <fullName evidence="1">Transcriptase subunit alpha</fullName>
    </alternativeName>
</protein>
<evidence type="ECO:0000255" key="1">
    <source>
        <dbReference type="HAMAP-Rule" id="MF_00059"/>
    </source>
</evidence>
<reference key="1">
    <citation type="journal article" date="2006" name="Proc. Natl. Acad. Sci. U.S.A.">
        <title>Comparative genomics of the lactic acid bacteria.</title>
        <authorList>
            <person name="Makarova K.S."/>
            <person name="Slesarev A."/>
            <person name="Wolf Y.I."/>
            <person name="Sorokin A."/>
            <person name="Mirkin B."/>
            <person name="Koonin E.V."/>
            <person name="Pavlov A."/>
            <person name="Pavlova N."/>
            <person name="Karamychev V."/>
            <person name="Polouchine N."/>
            <person name="Shakhova V."/>
            <person name="Grigoriev I."/>
            <person name="Lou Y."/>
            <person name="Rohksar D."/>
            <person name="Lucas S."/>
            <person name="Huang K."/>
            <person name="Goodstein D.M."/>
            <person name="Hawkins T."/>
            <person name="Plengvidhya V."/>
            <person name="Welker D."/>
            <person name="Hughes J."/>
            <person name="Goh Y."/>
            <person name="Benson A."/>
            <person name="Baldwin K."/>
            <person name="Lee J.-H."/>
            <person name="Diaz-Muniz I."/>
            <person name="Dosti B."/>
            <person name="Smeianov V."/>
            <person name="Wechter W."/>
            <person name="Barabote R."/>
            <person name="Lorca G."/>
            <person name="Altermann E."/>
            <person name="Barrangou R."/>
            <person name="Ganesan B."/>
            <person name="Xie Y."/>
            <person name="Rawsthorne H."/>
            <person name="Tamir D."/>
            <person name="Parker C."/>
            <person name="Breidt F."/>
            <person name="Broadbent J.R."/>
            <person name="Hutkins R."/>
            <person name="O'Sullivan D."/>
            <person name="Steele J."/>
            <person name="Unlu G."/>
            <person name="Saier M.H. Jr."/>
            <person name="Klaenhammer T."/>
            <person name="Richardson P."/>
            <person name="Kozyavkin S."/>
            <person name="Weimer B.C."/>
            <person name="Mills D.A."/>
        </authorList>
    </citation>
    <scope>NUCLEOTIDE SEQUENCE [LARGE SCALE GENOMIC DNA]</scope>
    <source>
        <strain>ATCC BAA-491 / LMD-9</strain>
    </source>
</reference>
<comment type="function">
    <text evidence="1">DNA-dependent RNA polymerase catalyzes the transcription of DNA into RNA using the four ribonucleoside triphosphates as substrates.</text>
</comment>
<comment type="catalytic activity">
    <reaction evidence="1">
        <text>RNA(n) + a ribonucleoside 5'-triphosphate = RNA(n+1) + diphosphate</text>
        <dbReference type="Rhea" id="RHEA:21248"/>
        <dbReference type="Rhea" id="RHEA-COMP:14527"/>
        <dbReference type="Rhea" id="RHEA-COMP:17342"/>
        <dbReference type="ChEBI" id="CHEBI:33019"/>
        <dbReference type="ChEBI" id="CHEBI:61557"/>
        <dbReference type="ChEBI" id="CHEBI:140395"/>
        <dbReference type="EC" id="2.7.7.6"/>
    </reaction>
</comment>
<comment type="subunit">
    <text evidence="1">Homodimer. The RNAP catalytic core consists of 2 alpha, 1 beta, 1 beta' and 1 omega subunit. When a sigma factor is associated with the core the holoenzyme is formed, which can initiate transcription.</text>
</comment>
<comment type="domain">
    <text evidence="1">The N-terminal domain is essential for RNAP assembly and basal transcription, whereas the C-terminal domain is involved in interaction with transcriptional regulators and with upstream promoter elements.</text>
</comment>
<comment type="similarity">
    <text evidence="1">Belongs to the RNA polymerase alpha chain family.</text>
</comment>
<organism>
    <name type="scientific">Streptococcus thermophilus (strain ATCC BAA-491 / LMD-9)</name>
    <dbReference type="NCBI Taxonomy" id="322159"/>
    <lineage>
        <taxon>Bacteria</taxon>
        <taxon>Bacillati</taxon>
        <taxon>Bacillota</taxon>
        <taxon>Bacilli</taxon>
        <taxon>Lactobacillales</taxon>
        <taxon>Streptococcaceae</taxon>
        <taxon>Streptococcus</taxon>
    </lineage>
</organism>
<keyword id="KW-0240">DNA-directed RNA polymerase</keyword>
<keyword id="KW-0548">Nucleotidyltransferase</keyword>
<keyword id="KW-0804">Transcription</keyword>
<keyword id="KW-0808">Transferase</keyword>